<sequence>MSLDVRVIAPNKVIWAKNAEEVILPSQSGMLGILTSHAPLYTALNTGVMKIRNETGWTSIVVMGGFVEVEKNEVLVLVNAGEYVDEIDLSAAKKDVEKALETFNSAEAPKEKEEAAEFLKYAQARLKAVVDK</sequence>
<reference key="1">
    <citation type="journal article" date="1995" name="Plant Mol. Biol. Rep.">
        <title>Nucleotide sequence of the cyanelle DNA from Cyanophora paradoxa.</title>
        <authorList>
            <person name="Stirewalt V.L."/>
            <person name="Michalowski C.B."/>
            <person name="Loeffelhardt W."/>
            <person name="Bohnert H.J."/>
            <person name="Bryant D.A."/>
        </authorList>
    </citation>
    <scope>NUCLEOTIDE SEQUENCE [LARGE SCALE GENOMIC DNA]</scope>
    <source>
        <strain>UTEX LB 555 / Pringsheim</strain>
    </source>
</reference>
<reference key="2">
    <citation type="book" date="1997" name="Eukaryotism and symbiosis">
        <title>The complete sequence of the cyanelle genome of Cyanophora paradoxa: the genetic complexity of a primitive plastid.</title>
        <editorList>
            <person name="Schenk H.E.A."/>
            <person name="Herrmann R."/>
            <person name="Jeon K.W."/>
            <person name="Mueller N.E."/>
            <person name="Schwemmler W."/>
        </editorList>
        <authorList>
            <person name="Loeffelhardt W."/>
            <person name="Stirewalt V.L."/>
            <person name="Michalowski C.B."/>
            <person name="Annarella M."/>
            <person name="Farley J.Y."/>
            <person name="Schluchter W.M."/>
            <person name="Chung S."/>
            <person name="Newmann-Spallart C."/>
            <person name="Steiner J.M."/>
            <person name="Jakowitsch J."/>
            <person name="Bohnert H.J."/>
            <person name="Bryant D.A."/>
        </authorList>
    </citation>
    <scope>NUCLEOTIDE SEQUENCE [LARGE SCALE GENOMIC DNA]</scope>
    <source>
        <strain>UTEX LB 555 / Pringsheim</strain>
    </source>
</reference>
<proteinExistence type="inferred from homology"/>
<name>ATPE_CYAPA</name>
<geneLocation type="cyanelle"/>
<gene>
    <name evidence="2" type="primary">atpE</name>
</gene>
<evidence type="ECO:0000250" key="1"/>
<evidence type="ECO:0000255" key="2">
    <source>
        <dbReference type="HAMAP-Rule" id="MF_00530"/>
    </source>
</evidence>
<dbReference type="EMBL" id="U30821">
    <property type="protein sequence ID" value="AAA81273.1"/>
    <property type="molecule type" value="Genomic_DNA"/>
</dbReference>
<dbReference type="PIR" id="T06930">
    <property type="entry name" value="T06930"/>
</dbReference>
<dbReference type="RefSeq" id="NP_043242.1">
    <property type="nucleotide sequence ID" value="NC_001675.1"/>
</dbReference>
<dbReference type="SMR" id="P48083"/>
<dbReference type="GeneID" id="801513"/>
<dbReference type="GO" id="GO:0033115">
    <property type="term" value="C:cyanelle thylakoid membrane"/>
    <property type="evidence" value="ECO:0007669"/>
    <property type="project" value="UniProtKB-SubCell"/>
</dbReference>
<dbReference type="GO" id="GO:0045259">
    <property type="term" value="C:proton-transporting ATP synthase complex"/>
    <property type="evidence" value="ECO:0007669"/>
    <property type="project" value="UniProtKB-KW"/>
</dbReference>
<dbReference type="GO" id="GO:0046933">
    <property type="term" value="F:proton-transporting ATP synthase activity, rotational mechanism"/>
    <property type="evidence" value="ECO:0007669"/>
    <property type="project" value="InterPro"/>
</dbReference>
<dbReference type="CDD" id="cd12152">
    <property type="entry name" value="F1-ATPase_delta"/>
    <property type="match status" value="1"/>
</dbReference>
<dbReference type="Gene3D" id="2.60.15.10">
    <property type="entry name" value="F0F1 ATP synthase delta/epsilon subunit, N-terminal"/>
    <property type="match status" value="1"/>
</dbReference>
<dbReference type="HAMAP" id="MF_00530">
    <property type="entry name" value="ATP_synth_epsil_bac"/>
    <property type="match status" value="1"/>
</dbReference>
<dbReference type="InterPro" id="IPR001469">
    <property type="entry name" value="ATP_synth_F1_dsu/esu"/>
</dbReference>
<dbReference type="InterPro" id="IPR020546">
    <property type="entry name" value="ATP_synth_F1_dsu/esu_N"/>
</dbReference>
<dbReference type="InterPro" id="IPR036771">
    <property type="entry name" value="ATPsynth_dsu/esu_N"/>
</dbReference>
<dbReference type="NCBIfam" id="TIGR01216">
    <property type="entry name" value="ATP_synt_epsi"/>
    <property type="match status" value="1"/>
</dbReference>
<dbReference type="PANTHER" id="PTHR13822">
    <property type="entry name" value="ATP SYNTHASE DELTA/EPSILON CHAIN"/>
    <property type="match status" value="1"/>
</dbReference>
<dbReference type="PANTHER" id="PTHR13822:SF10">
    <property type="entry name" value="ATP SYNTHASE EPSILON CHAIN, CHLOROPLASTIC"/>
    <property type="match status" value="1"/>
</dbReference>
<dbReference type="Pfam" id="PF02823">
    <property type="entry name" value="ATP-synt_DE_N"/>
    <property type="match status" value="1"/>
</dbReference>
<dbReference type="SUPFAM" id="SSF51344">
    <property type="entry name" value="Epsilon subunit of F1F0-ATP synthase N-terminal domain"/>
    <property type="match status" value="1"/>
</dbReference>
<comment type="function">
    <text evidence="2">Produces ATP from ADP in the presence of a proton gradient across the membrane.</text>
</comment>
<comment type="subunit">
    <text evidence="2">F-type ATPases have 2 components, CF(1) - the catalytic core - and CF(0) - the membrane proton channel. CF(1) has five subunits: alpha(3), beta(3), gamma(1), delta(1), epsilon(1). CF(0) has three main subunits: a, b and c.</text>
</comment>
<comment type="subcellular location">
    <subcellularLocation>
        <location evidence="1">Plastid</location>
        <location evidence="1">Cyanelle thylakoid membrane</location>
        <topology evidence="2">Peripheral membrane protein</topology>
    </subcellularLocation>
</comment>
<comment type="similarity">
    <text evidence="2">Belongs to the ATPase epsilon chain family.</text>
</comment>
<organism>
    <name type="scientific">Cyanophora paradoxa</name>
    <dbReference type="NCBI Taxonomy" id="2762"/>
    <lineage>
        <taxon>Eukaryota</taxon>
        <taxon>Glaucocystophyceae</taxon>
        <taxon>Cyanophoraceae</taxon>
        <taxon>Cyanophora</taxon>
    </lineage>
</organism>
<accession>P48083</accession>
<protein>
    <recommendedName>
        <fullName evidence="2">ATP synthase epsilon chain, cyanelle</fullName>
    </recommendedName>
    <alternativeName>
        <fullName evidence="2">ATP synthase F1 sector epsilon subunit</fullName>
    </alternativeName>
    <alternativeName>
        <fullName evidence="2">F-ATPase epsilon subunit</fullName>
    </alternativeName>
</protein>
<feature type="chain" id="PRO_0000188248" description="ATP synthase epsilon chain, cyanelle">
    <location>
        <begin position="1"/>
        <end position="132"/>
    </location>
</feature>
<keyword id="KW-0066">ATP synthesis</keyword>
<keyword id="KW-0139">CF(1)</keyword>
<keyword id="KW-0194">Cyanelle</keyword>
<keyword id="KW-0375">Hydrogen ion transport</keyword>
<keyword id="KW-0406">Ion transport</keyword>
<keyword id="KW-0472">Membrane</keyword>
<keyword id="KW-0934">Plastid</keyword>
<keyword id="KW-0793">Thylakoid</keyword>
<keyword id="KW-0813">Transport</keyword>